<evidence type="ECO:0000255" key="1">
    <source>
        <dbReference type="HAMAP-Rule" id="MF_00600"/>
    </source>
</evidence>
<evidence type="ECO:0000269" key="2">
    <source>
    </source>
</evidence>
<keyword id="KW-0067">ATP-binding</keyword>
<keyword id="KW-0143">Chaperone</keyword>
<keyword id="KW-0963">Cytoplasm</keyword>
<keyword id="KW-0903">Direct protein sequencing</keyword>
<keyword id="KW-0413">Isomerase</keyword>
<keyword id="KW-0547">Nucleotide-binding</keyword>
<proteinExistence type="evidence at protein level"/>
<comment type="function">
    <text evidence="1">Together with its co-chaperonin GroES, plays an essential role in assisting protein folding. The GroEL-GroES system forms a nano-cage that allows encapsulation of the non-native substrate proteins and provides a physical environment optimized to promote and accelerate protein folding.</text>
</comment>
<comment type="catalytic activity">
    <reaction evidence="1">
        <text>ATP + H2O + a folded polypeptide = ADP + phosphate + an unfolded polypeptide.</text>
        <dbReference type="EC" id="5.6.1.7"/>
    </reaction>
</comment>
<comment type="subunit">
    <text evidence="1">Forms a cylinder of 14 subunits composed of two heptameric rings stacked back-to-back. Interacts with the co-chaperonin GroES.</text>
</comment>
<comment type="subcellular location">
    <subcellularLocation>
        <location evidence="1">Cytoplasm</location>
    </subcellularLocation>
</comment>
<comment type="similarity">
    <text evidence="1">Belongs to the chaperonin (HSP60) family.</text>
</comment>
<accession>P46398</accession>
<organism>
    <name type="scientific">Aggregatibacter actinomycetemcomitans</name>
    <name type="common">Actinobacillus actinomycetemcomitans</name>
    <name type="synonym">Haemophilus actinomycetemcomitans</name>
    <dbReference type="NCBI Taxonomy" id="714"/>
    <lineage>
        <taxon>Bacteria</taxon>
        <taxon>Pseudomonadati</taxon>
        <taxon>Pseudomonadota</taxon>
        <taxon>Gammaproteobacteria</taxon>
        <taxon>Pasteurellales</taxon>
        <taxon>Pasteurellaceae</taxon>
        <taxon>Aggregatibacter</taxon>
    </lineage>
</organism>
<reference key="1">
    <citation type="journal article" date="1995" name="Oral Microbiol. Immunol.">
        <title>Molecular and immunological characterization of a 64-kDa protein of Actinobacillus actinomycetemcomitans.</title>
        <authorList>
            <person name="Nakano T."/>
            <person name="Inai Y."/>
            <person name="Yamahsita Y."/>
            <person name="Kusuzaki-Nagira T."/>
            <person name="Nagaoka S."/>
            <person name="Okahashi N."/>
            <person name="Koga T."/>
            <person name="Nishihara T."/>
        </authorList>
    </citation>
    <scope>NUCLEOTIDE SEQUENCE [GENOMIC DNA]</scope>
    <scope>PROTEIN SEQUENCE OF 2-40</scope>
    <source>
        <strain>ATCC 43718 / FDC Y4 / Serotype b</strain>
    </source>
</reference>
<protein>
    <recommendedName>
        <fullName evidence="1">Chaperonin GroEL</fullName>
        <ecNumber evidence="1">5.6.1.7</ecNumber>
    </recommendedName>
    <alternativeName>
        <fullName evidence="1">60 kDa chaperonin</fullName>
    </alternativeName>
    <alternativeName>
        <fullName evidence="1">Chaperonin-60</fullName>
        <shortName evidence="1">Cpn60</shortName>
    </alternativeName>
</protein>
<feature type="initiator methionine" description="Removed" evidence="2">
    <location>
        <position position="1"/>
    </location>
</feature>
<feature type="chain" id="PRO_0000063253" description="Chaperonin GroEL">
    <location>
        <begin position="2"/>
        <end position="547"/>
    </location>
</feature>
<feature type="binding site" evidence="1">
    <location>
        <begin position="30"/>
        <end position="33"/>
    </location>
    <ligand>
        <name>ATP</name>
        <dbReference type="ChEBI" id="CHEBI:30616"/>
    </ligand>
</feature>
<feature type="binding site" evidence="1">
    <location>
        <position position="51"/>
    </location>
    <ligand>
        <name>ATP</name>
        <dbReference type="ChEBI" id="CHEBI:30616"/>
    </ligand>
</feature>
<feature type="binding site" evidence="1">
    <location>
        <begin position="87"/>
        <end position="91"/>
    </location>
    <ligand>
        <name>ATP</name>
        <dbReference type="ChEBI" id="CHEBI:30616"/>
    </ligand>
</feature>
<feature type="binding site" evidence="1">
    <location>
        <position position="415"/>
    </location>
    <ligand>
        <name>ATP</name>
        <dbReference type="ChEBI" id="CHEBI:30616"/>
    </ligand>
</feature>
<feature type="binding site" evidence="1">
    <location>
        <position position="495"/>
    </location>
    <ligand>
        <name>ATP</name>
        <dbReference type="ChEBI" id="CHEBI:30616"/>
    </ligand>
</feature>
<dbReference type="EC" id="5.6.1.7" evidence="1"/>
<dbReference type="EMBL" id="D28817">
    <property type="protein sequence ID" value="BAA05977.1"/>
    <property type="molecule type" value="Genomic_DNA"/>
</dbReference>
<dbReference type="RefSeq" id="WP_005547876.1">
    <property type="nucleotide sequence ID" value="NZ_VSEW01000019.1"/>
</dbReference>
<dbReference type="SMR" id="P46398"/>
<dbReference type="STRING" id="714.ACT75_06260"/>
<dbReference type="eggNOG" id="COG0459">
    <property type="taxonomic scope" value="Bacteria"/>
</dbReference>
<dbReference type="OMA" id="TDTDKME"/>
<dbReference type="GO" id="GO:0005737">
    <property type="term" value="C:cytoplasm"/>
    <property type="evidence" value="ECO:0007669"/>
    <property type="project" value="UniProtKB-SubCell"/>
</dbReference>
<dbReference type="GO" id="GO:0005524">
    <property type="term" value="F:ATP binding"/>
    <property type="evidence" value="ECO:0007669"/>
    <property type="project" value="UniProtKB-UniRule"/>
</dbReference>
<dbReference type="GO" id="GO:0140662">
    <property type="term" value="F:ATP-dependent protein folding chaperone"/>
    <property type="evidence" value="ECO:0007669"/>
    <property type="project" value="InterPro"/>
</dbReference>
<dbReference type="GO" id="GO:0016853">
    <property type="term" value="F:isomerase activity"/>
    <property type="evidence" value="ECO:0007669"/>
    <property type="project" value="UniProtKB-KW"/>
</dbReference>
<dbReference type="GO" id="GO:0051082">
    <property type="term" value="F:unfolded protein binding"/>
    <property type="evidence" value="ECO:0007669"/>
    <property type="project" value="UniProtKB-UniRule"/>
</dbReference>
<dbReference type="GO" id="GO:0042026">
    <property type="term" value="P:protein refolding"/>
    <property type="evidence" value="ECO:0007669"/>
    <property type="project" value="UniProtKB-UniRule"/>
</dbReference>
<dbReference type="CDD" id="cd03344">
    <property type="entry name" value="GroEL"/>
    <property type="match status" value="1"/>
</dbReference>
<dbReference type="FunFam" id="1.10.560.10:FF:000001">
    <property type="entry name" value="60 kDa chaperonin"/>
    <property type="match status" value="1"/>
</dbReference>
<dbReference type="FunFam" id="3.50.7.10:FF:000001">
    <property type="entry name" value="60 kDa chaperonin"/>
    <property type="match status" value="1"/>
</dbReference>
<dbReference type="Gene3D" id="3.50.7.10">
    <property type="entry name" value="GroEL"/>
    <property type="match status" value="1"/>
</dbReference>
<dbReference type="Gene3D" id="1.10.560.10">
    <property type="entry name" value="GroEL-like equatorial domain"/>
    <property type="match status" value="1"/>
</dbReference>
<dbReference type="Gene3D" id="3.30.260.10">
    <property type="entry name" value="TCP-1-like chaperonin intermediate domain"/>
    <property type="match status" value="1"/>
</dbReference>
<dbReference type="HAMAP" id="MF_00600">
    <property type="entry name" value="CH60"/>
    <property type="match status" value="1"/>
</dbReference>
<dbReference type="InterPro" id="IPR018370">
    <property type="entry name" value="Chaperonin_Cpn60_CS"/>
</dbReference>
<dbReference type="InterPro" id="IPR001844">
    <property type="entry name" value="Cpn60/GroEL"/>
</dbReference>
<dbReference type="InterPro" id="IPR002423">
    <property type="entry name" value="Cpn60/GroEL/TCP-1"/>
</dbReference>
<dbReference type="InterPro" id="IPR027409">
    <property type="entry name" value="GroEL-like_apical_dom_sf"/>
</dbReference>
<dbReference type="InterPro" id="IPR027413">
    <property type="entry name" value="GROEL-like_equatorial_sf"/>
</dbReference>
<dbReference type="InterPro" id="IPR027410">
    <property type="entry name" value="TCP-1-like_intermed_sf"/>
</dbReference>
<dbReference type="NCBIfam" id="TIGR02348">
    <property type="entry name" value="GroEL"/>
    <property type="match status" value="1"/>
</dbReference>
<dbReference type="NCBIfam" id="NF000592">
    <property type="entry name" value="PRK00013.1"/>
    <property type="match status" value="1"/>
</dbReference>
<dbReference type="NCBIfam" id="NF009487">
    <property type="entry name" value="PRK12849.1"/>
    <property type="match status" value="1"/>
</dbReference>
<dbReference type="NCBIfam" id="NF009488">
    <property type="entry name" value="PRK12850.1"/>
    <property type="match status" value="1"/>
</dbReference>
<dbReference type="NCBIfam" id="NF009489">
    <property type="entry name" value="PRK12851.1"/>
    <property type="match status" value="1"/>
</dbReference>
<dbReference type="PANTHER" id="PTHR45633">
    <property type="entry name" value="60 KDA HEAT SHOCK PROTEIN, MITOCHONDRIAL"/>
    <property type="match status" value="1"/>
</dbReference>
<dbReference type="Pfam" id="PF00118">
    <property type="entry name" value="Cpn60_TCP1"/>
    <property type="match status" value="1"/>
</dbReference>
<dbReference type="PRINTS" id="PR00298">
    <property type="entry name" value="CHAPERONIN60"/>
</dbReference>
<dbReference type="SUPFAM" id="SSF52029">
    <property type="entry name" value="GroEL apical domain-like"/>
    <property type="match status" value="1"/>
</dbReference>
<dbReference type="SUPFAM" id="SSF48592">
    <property type="entry name" value="GroEL equatorial domain-like"/>
    <property type="match status" value="1"/>
</dbReference>
<dbReference type="SUPFAM" id="SSF54849">
    <property type="entry name" value="GroEL-intermediate domain like"/>
    <property type="match status" value="1"/>
</dbReference>
<dbReference type="PROSITE" id="PS00296">
    <property type="entry name" value="CHAPERONINS_CPN60"/>
    <property type="match status" value="1"/>
</dbReference>
<sequence>MAAKDVKFGNDARVKMLNGVNILADAVKVTLGPKGRNVVLDKSFGAPTITKDGVSVAREIELEDKFENMGAQMVKEVASKANDAAGDGTTTATVLAQAIVNEGLKAVAAGMNPMDLKRGIDKAVNSVVAELKNLSKPCETSKEIEQVGTISANSDSIVGQLIAQAMEKVGKEGVITVEDGTGLEDELDVVEGMQFDRGYLSPYFINKPETATVELDNPFILLVDKKISNIRELLPVLEGVAKAGKPLLIIAEDVEGEALATLVVNTMRGIVKVAAVKAPGFGDRRKAMLQDIAILTAGTVISEEIGMELEKATLEDLGQAKRIVINKDNTTIIDGIGDEAQIQGRVAQIRQQIEESTSDYDKEKLQERVAKLAGGVAVIKVGAATEVEMKEKKARVEDALHATRAAVEEGIVAGGGVALIRAAGRVVGLQGENEEQNVGIKLALRAMEAPLRQIVANAGEEASVIASAVKNGEGNFGYNAGTEQYGDMIAMGILDPTKVTRSALQFAASVAGLMITTECMVTELPKDDKADLGAAGMGGMGGMGGMM</sequence>
<name>CH60_AGGAC</name>
<gene>
    <name evidence="1" type="primary">groEL</name>
    <name evidence="1" type="synonym">groL</name>
    <name type="synonym">mopA</name>
</gene>